<name>LEU1_AGRFC</name>
<protein>
    <recommendedName>
        <fullName evidence="1">2-isopropylmalate synthase</fullName>
        <ecNumber evidence="1">2.3.3.13</ecNumber>
    </recommendedName>
    <alternativeName>
        <fullName evidence="1">Alpha-IPM synthase</fullName>
    </alternativeName>
    <alternativeName>
        <fullName evidence="1">Alpha-isopropylmalate synthase</fullName>
    </alternativeName>
</protein>
<comment type="function">
    <text evidence="1">Catalyzes the condensation of the acetyl group of acetyl-CoA with 3-methyl-2-oxobutanoate (2-ketoisovalerate) to form 3-carboxy-3-hydroxy-4-methylpentanoate (2-isopropylmalate).</text>
</comment>
<comment type="catalytic activity">
    <reaction evidence="1">
        <text>3-methyl-2-oxobutanoate + acetyl-CoA + H2O = (2S)-2-isopropylmalate + CoA + H(+)</text>
        <dbReference type="Rhea" id="RHEA:21524"/>
        <dbReference type="ChEBI" id="CHEBI:1178"/>
        <dbReference type="ChEBI" id="CHEBI:11851"/>
        <dbReference type="ChEBI" id="CHEBI:15377"/>
        <dbReference type="ChEBI" id="CHEBI:15378"/>
        <dbReference type="ChEBI" id="CHEBI:57287"/>
        <dbReference type="ChEBI" id="CHEBI:57288"/>
        <dbReference type="EC" id="2.3.3.13"/>
    </reaction>
</comment>
<comment type="cofactor">
    <cofactor evidence="1">
        <name>Mg(2+)</name>
        <dbReference type="ChEBI" id="CHEBI:18420"/>
    </cofactor>
</comment>
<comment type="pathway">
    <text evidence="1">Amino-acid biosynthesis; L-leucine biosynthesis; L-leucine from 3-methyl-2-oxobutanoate: step 1/4.</text>
</comment>
<comment type="subunit">
    <text evidence="1">Homodimer.</text>
</comment>
<comment type="subcellular location">
    <subcellularLocation>
        <location evidence="1">Cytoplasm</location>
    </subcellularLocation>
</comment>
<comment type="similarity">
    <text evidence="1">Belongs to the alpha-IPM synthase/homocitrate synthase family. LeuA type 2 subfamily.</text>
</comment>
<comment type="sequence caution" evidence="2">
    <conflict type="erroneous initiation">
        <sequence resource="EMBL-CDS" id="AAK88005"/>
    </conflict>
    <text>Extended N-terminus.</text>
</comment>
<keyword id="KW-0028">Amino-acid biosynthesis</keyword>
<keyword id="KW-0100">Branched-chain amino acid biosynthesis</keyword>
<keyword id="KW-0963">Cytoplasm</keyword>
<keyword id="KW-0432">Leucine biosynthesis</keyword>
<keyword id="KW-0460">Magnesium</keyword>
<keyword id="KW-0479">Metal-binding</keyword>
<keyword id="KW-1185">Reference proteome</keyword>
<keyword id="KW-0808">Transferase</keyword>
<proteinExistence type="inferred from homology"/>
<evidence type="ECO:0000255" key="1">
    <source>
        <dbReference type="HAMAP-Rule" id="MF_00572"/>
    </source>
</evidence>
<evidence type="ECO:0000305" key="2"/>
<organism>
    <name type="scientific">Agrobacterium fabrum (strain C58 / ATCC 33970)</name>
    <name type="common">Agrobacterium tumefaciens (strain C58)</name>
    <dbReference type="NCBI Taxonomy" id="176299"/>
    <lineage>
        <taxon>Bacteria</taxon>
        <taxon>Pseudomonadati</taxon>
        <taxon>Pseudomonadota</taxon>
        <taxon>Alphaproteobacteria</taxon>
        <taxon>Hyphomicrobiales</taxon>
        <taxon>Rhizobiaceae</taxon>
        <taxon>Rhizobium/Agrobacterium group</taxon>
        <taxon>Agrobacterium</taxon>
        <taxon>Agrobacterium tumefaciens complex</taxon>
    </lineage>
</organism>
<reference key="1">
    <citation type="journal article" date="2001" name="Science">
        <title>The genome of the natural genetic engineer Agrobacterium tumefaciens C58.</title>
        <authorList>
            <person name="Wood D.W."/>
            <person name="Setubal J.C."/>
            <person name="Kaul R."/>
            <person name="Monks D.E."/>
            <person name="Kitajima J.P."/>
            <person name="Okura V.K."/>
            <person name="Zhou Y."/>
            <person name="Chen L."/>
            <person name="Wood G.E."/>
            <person name="Almeida N.F. Jr."/>
            <person name="Woo L."/>
            <person name="Chen Y."/>
            <person name="Paulsen I.T."/>
            <person name="Eisen J.A."/>
            <person name="Karp P.D."/>
            <person name="Bovee D. Sr."/>
            <person name="Chapman P."/>
            <person name="Clendenning J."/>
            <person name="Deatherage G."/>
            <person name="Gillet W."/>
            <person name="Grant C."/>
            <person name="Kutyavin T."/>
            <person name="Levy R."/>
            <person name="Li M.-J."/>
            <person name="McClelland E."/>
            <person name="Palmieri A."/>
            <person name="Raymond C."/>
            <person name="Rouse G."/>
            <person name="Saenphimmachak C."/>
            <person name="Wu Z."/>
            <person name="Romero P."/>
            <person name="Gordon D."/>
            <person name="Zhang S."/>
            <person name="Yoo H."/>
            <person name="Tao Y."/>
            <person name="Biddle P."/>
            <person name="Jung M."/>
            <person name="Krespan W."/>
            <person name="Perry M."/>
            <person name="Gordon-Kamm B."/>
            <person name="Liao L."/>
            <person name="Kim S."/>
            <person name="Hendrick C."/>
            <person name="Zhao Z.-Y."/>
            <person name="Dolan M."/>
            <person name="Chumley F."/>
            <person name="Tingey S.V."/>
            <person name="Tomb J.-F."/>
            <person name="Gordon M.P."/>
            <person name="Olson M.V."/>
            <person name="Nester E.W."/>
        </authorList>
    </citation>
    <scope>NUCLEOTIDE SEQUENCE [LARGE SCALE GENOMIC DNA]</scope>
    <source>
        <strain>C58 / ATCC 33970</strain>
    </source>
</reference>
<reference key="2">
    <citation type="journal article" date="2001" name="Science">
        <title>Genome sequence of the plant pathogen and biotechnology agent Agrobacterium tumefaciens C58.</title>
        <authorList>
            <person name="Goodner B."/>
            <person name="Hinkle G."/>
            <person name="Gattung S."/>
            <person name="Miller N."/>
            <person name="Blanchard M."/>
            <person name="Qurollo B."/>
            <person name="Goldman B.S."/>
            <person name="Cao Y."/>
            <person name="Askenazi M."/>
            <person name="Halling C."/>
            <person name="Mullin L."/>
            <person name="Houmiel K."/>
            <person name="Gordon J."/>
            <person name="Vaudin M."/>
            <person name="Iartchouk O."/>
            <person name="Epp A."/>
            <person name="Liu F."/>
            <person name="Wollam C."/>
            <person name="Allinger M."/>
            <person name="Doughty D."/>
            <person name="Scott C."/>
            <person name="Lappas C."/>
            <person name="Markelz B."/>
            <person name="Flanagan C."/>
            <person name="Crowell C."/>
            <person name="Gurson J."/>
            <person name="Lomo C."/>
            <person name="Sear C."/>
            <person name="Strub G."/>
            <person name="Cielo C."/>
            <person name="Slater S."/>
        </authorList>
    </citation>
    <scope>NUCLEOTIDE SEQUENCE [LARGE SCALE GENOMIC DNA]</scope>
    <source>
        <strain>C58 / ATCC 33970</strain>
    </source>
</reference>
<accession>Q8UD63</accession>
<feature type="chain" id="PRO_0000140427" description="2-isopropylmalate synthase">
    <location>
        <begin position="1"/>
        <end position="558"/>
    </location>
</feature>
<feature type="domain" description="Pyruvate carboxyltransferase" evidence="1">
    <location>
        <begin position="30"/>
        <end position="303"/>
    </location>
</feature>
<feature type="region of interest" description="Regulatory domain" evidence="1">
    <location>
        <begin position="437"/>
        <end position="558"/>
    </location>
</feature>
<feature type="binding site" evidence="1">
    <location>
        <position position="39"/>
    </location>
    <ligand>
        <name>Mg(2+)</name>
        <dbReference type="ChEBI" id="CHEBI:18420"/>
    </ligand>
</feature>
<feature type="binding site" evidence="1">
    <location>
        <position position="242"/>
    </location>
    <ligand>
        <name>Mg(2+)</name>
        <dbReference type="ChEBI" id="CHEBI:18420"/>
    </ligand>
</feature>
<feature type="binding site" evidence="1">
    <location>
        <position position="244"/>
    </location>
    <ligand>
        <name>Mg(2+)</name>
        <dbReference type="ChEBI" id="CHEBI:18420"/>
    </ligand>
</feature>
<feature type="binding site" evidence="1">
    <location>
        <position position="278"/>
    </location>
    <ligand>
        <name>Mg(2+)</name>
        <dbReference type="ChEBI" id="CHEBI:18420"/>
    </ligand>
</feature>
<dbReference type="EC" id="2.3.3.13" evidence="1"/>
<dbReference type="EMBL" id="AE007869">
    <property type="protein sequence ID" value="AAK88005.2"/>
    <property type="status" value="ALT_INIT"/>
    <property type="molecule type" value="Genomic_DNA"/>
</dbReference>
<dbReference type="PIR" id="AG2854">
    <property type="entry name" value="AG2854"/>
</dbReference>
<dbReference type="PIR" id="D97631">
    <property type="entry name" value="D97631"/>
</dbReference>
<dbReference type="RefSeq" id="NP_355220.2">
    <property type="nucleotide sequence ID" value="NC_003062.2"/>
</dbReference>
<dbReference type="RefSeq" id="WP_010972185.1">
    <property type="nucleotide sequence ID" value="NC_003062.2"/>
</dbReference>
<dbReference type="SMR" id="Q8UD63"/>
<dbReference type="STRING" id="176299.Atu2264"/>
<dbReference type="EnsemblBacteria" id="AAK88005">
    <property type="protein sequence ID" value="AAK88005"/>
    <property type="gene ID" value="Atu2264"/>
</dbReference>
<dbReference type="GeneID" id="1134302"/>
<dbReference type="KEGG" id="atu:Atu2264"/>
<dbReference type="PATRIC" id="fig|176299.10.peg.2274"/>
<dbReference type="eggNOG" id="COG0119">
    <property type="taxonomic scope" value="Bacteria"/>
</dbReference>
<dbReference type="HOGENOM" id="CLU_004588_3_0_5"/>
<dbReference type="OrthoDB" id="9803573at2"/>
<dbReference type="UniPathway" id="UPA00048">
    <property type="reaction ID" value="UER00070"/>
</dbReference>
<dbReference type="Proteomes" id="UP000000813">
    <property type="component" value="Chromosome circular"/>
</dbReference>
<dbReference type="GO" id="GO:0005737">
    <property type="term" value="C:cytoplasm"/>
    <property type="evidence" value="ECO:0007669"/>
    <property type="project" value="UniProtKB-SubCell"/>
</dbReference>
<dbReference type="GO" id="GO:0003852">
    <property type="term" value="F:2-isopropylmalate synthase activity"/>
    <property type="evidence" value="ECO:0007669"/>
    <property type="project" value="UniProtKB-UniRule"/>
</dbReference>
<dbReference type="GO" id="GO:0003985">
    <property type="term" value="F:acetyl-CoA C-acetyltransferase activity"/>
    <property type="evidence" value="ECO:0007669"/>
    <property type="project" value="UniProtKB-UniRule"/>
</dbReference>
<dbReference type="GO" id="GO:0000287">
    <property type="term" value="F:magnesium ion binding"/>
    <property type="evidence" value="ECO:0007669"/>
    <property type="project" value="UniProtKB-UniRule"/>
</dbReference>
<dbReference type="GO" id="GO:0009098">
    <property type="term" value="P:L-leucine biosynthetic process"/>
    <property type="evidence" value="ECO:0007669"/>
    <property type="project" value="UniProtKB-UniRule"/>
</dbReference>
<dbReference type="CDD" id="cd07942">
    <property type="entry name" value="DRE_TIM_LeuA"/>
    <property type="match status" value="1"/>
</dbReference>
<dbReference type="Gene3D" id="3.30.160.270">
    <property type="match status" value="1"/>
</dbReference>
<dbReference type="Gene3D" id="3.20.20.70">
    <property type="entry name" value="Aldolase class I"/>
    <property type="match status" value="1"/>
</dbReference>
<dbReference type="HAMAP" id="MF_00572">
    <property type="entry name" value="LeuA_type2"/>
    <property type="match status" value="1"/>
</dbReference>
<dbReference type="InterPro" id="IPR013709">
    <property type="entry name" value="2-isopropylmalate_synth_dimer"/>
</dbReference>
<dbReference type="InterPro" id="IPR002034">
    <property type="entry name" value="AIPM/Hcit_synth_CS"/>
</dbReference>
<dbReference type="InterPro" id="IPR013785">
    <property type="entry name" value="Aldolase_TIM"/>
</dbReference>
<dbReference type="InterPro" id="IPR005668">
    <property type="entry name" value="IPM_Synthase"/>
</dbReference>
<dbReference type="InterPro" id="IPR054692">
    <property type="entry name" value="LeuA-like_post-cat"/>
</dbReference>
<dbReference type="InterPro" id="IPR036230">
    <property type="entry name" value="LeuA_allosteric_dom_sf"/>
</dbReference>
<dbReference type="InterPro" id="IPR039371">
    <property type="entry name" value="LeuA_N_DRE-TIM"/>
</dbReference>
<dbReference type="InterPro" id="IPR000891">
    <property type="entry name" value="PYR_CT"/>
</dbReference>
<dbReference type="NCBIfam" id="TIGR00970">
    <property type="entry name" value="leuA_yeast"/>
    <property type="match status" value="1"/>
</dbReference>
<dbReference type="NCBIfam" id="NF002991">
    <property type="entry name" value="PRK03739.1"/>
    <property type="match status" value="1"/>
</dbReference>
<dbReference type="PANTHER" id="PTHR46911">
    <property type="match status" value="1"/>
</dbReference>
<dbReference type="PANTHER" id="PTHR46911:SF1">
    <property type="entry name" value="2-ISOPROPYLMALATE SYNTHASE"/>
    <property type="match status" value="1"/>
</dbReference>
<dbReference type="Pfam" id="PF00682">
    <property type="entry name" value="HMGL-like"/>
    <property type="match status" value="1"/>
</dbReference>
<dbReference type="Pfam" id="PF22615">
    <property type="entry name" value="IPMS_D2"/>
    <property type="match status" value="1"/>
</dbReference>
<dbReference type="Pfam" id="PF08502">
    <property type="entry name" value="LeuA_dimer"/>
    <property type="match status" value="1"/>
</dbReference>
<dbReference type="SMART" id="SM00917">
    <property type="entry name" value="LeuA_dimer"/>
    <property type="match status" value="1"/>
</dbReference>
<dbReference type="SUPFAM" id="SSF110921">
    <property type="entry name" value="2-isopropylmalate synthase LeuA, allosteric (dimerisation) domain"/>
    <property type="match status" value="1"/>
</dbReference>
<dbReference type="SUPFAM" id="SSF51569">
    <property type="entry name" value="Aldolase"/>
    <property type="match status" value="1"/>
</dbReference>
<dbReference type="SUPFAM" id="SSF89000">
    <property type="entry name" value="post-HMGL domain-like"/>
    <property type="match status" value="1"/>
</dbReference>
<dbReference type="PROSITE" id="PS00815">
    <property type="entry name" value="AIPM_HOMOCIT_SYNTH_1"/>
    <property type="match status" value="1"/>
</dbReference>
<dbReference type="PROSITE" id="PS00816">
    <property type="entry name" value="AIPM_HOMOCIT_SYNTH_2"/>
    <property type="match status" value="1"/>
</dbReference>
<dbReference type="PROSITE" id="PS50991">
    <property type="entry name" value="PYR_CT"/>
    <property type="match status" value="1"/>
</dbReference>
<gene>
    <name evidence="1" type="primary">leuA</name>
    <name type="ordered locus">Atu2264</name>
    <name type="ORF">AGR_C_4114</name>
</gene>
<sequence length="558" mass="61978">MTDASVKYRPYPTINIPDRTWPGKTIDKAPIWCSVDLRDGNQSLVNPMGHDRKARMFKLLLEMGFKEIEIGFPSASQTDFDFARWCVEEGNVPDDVSLQVLVQCRPELITRTFEALEGANKPIIHFYNSTSELQRRVVFGKDVHGIKQIAVDAAKMITDMAAKAGGGFRFEYSPESFTGTELEVALEICNAVVEVVKPTADNKLILNLPSTVEMATPNIYADQIEWMCRNIDNRENVIISLHPHNDRGTGIAATELALMAGADRVEGTLFGNGERTGNVDVVTLALNMYTQGVDPELDCRDIERIKAVYEYSNEMTIPERHPYVGELVYTAFSGSHQDAINKGMKAIKVANHPVWEVPYLPIDPKDVGRSYEAIIRINSQSGKGGIAYILQQDYGINLPRNLQVEFREDIQRITDEEGVELPAKRIYERFIERYVTQPNARIKFVDHHTYPAGDFKGVRIVAAEITDNGEVKRIEGKGTGPIDGFINALSVYLGVDLSVNDYSEHSLQHGSNASAIAYVEMEHPGGKLFGAGVNTNIVAASLEAIVSAANRVLEERAK</sequence>